<feature type="chain" id="PRO_0000372070" description="Uncharacterized protein ORF10">
    <location>
        <begin position="1"/>
        <end position="67"/>
    </location>
</feature>
<feature type="transmembrane region" description="Helical" evidence="1">
    <location>
        <begin position="10"/>
        <end position="30"/>
    </location>
</feature>
<feature type="transmembrane region" description="Helical" evidence="1">
    <location>
        <begin position="40"/>
        <end position="60"/>
    </location>
</feature>
<gene>
    <name type="ORF">ORF10</name>
</gene>
<accession>Q88426</accession>
<sequence>MQNDWQEFKEFFIYIFLFIDKANVESIIMWNLTQNEYLTLMVGVWVVILFLTWFFLWMVFKIVGYFK</sequence>
<protein>
    <recommendedName>
        <fullName>Uncharacterized protein ORF10</fullName>
    </recommendedName>
</protein>
<proteinExistence type="inferred from homology"/>
<comment type="subcellular location">
    <subcellularLocation>
        <location evidence="2">Host membrane</location>
        <topology evidence="2">Multi-pass membrane protein</topology>
    </subcellularLocation>
</comment>
<comment type="similarity">
    <text evidence="2">Belongs to the plectrovirus ORF10 family.</text>
</comment>
<reference key="1">
    <citation type="journal article" date="1996" name="Curr. Microbiol.">
        <title>Spiroplasma citri Virus SpV1: Characterization of viral sequences present in the spiroplasmal host chromosome.</title>
        <authorList>
            <person name="Bebear C.M."/>
            <person name="Aullo P."/>
            <person name="Bove J."/>
            <person name="Renaudin J."/>
        </authorList>
    </citation>
    <scope>NUCLEOTIDE SEQUENCE [GENOMIC DNA]</scope>
</reference>
<dbReference type="EMBL" id="U28974">
    <property type="protein sequence ID" value="AAA85019.1"/>
    <property type="molecule type" value="Genomic_DNA"/>
</dbReference>
<dbReference type="RefSeq" id="NP_620633.1">
    <property type="nucleotide sequence ID" value="NC_003793.1"/>
</dbReference>
<dbReference type="SMR" id="Q88426"/>
<dbReference type="KEGG" id="vg:944360"/>
<dbReference type="OrthoDB" id="24070at10239"/>
<dbReference type="Proteomes" id="UP000001764">
    <property type="component" value="Genome"/>
</dbReference>
<dbReference type="GO" id="GO:0033644">
    <property type="term" value="C:host cell membrane"/>
    <property type="evidence" value="ECO:0007669"/>
    <property type="project" value="UniProtKB-SubCell"/>
</dbReference>
<dbReference type="GO" id="GO:0016020">
    <property type="term" value="C:membrane"/>
    <property type="evidence" value="ECO:0007669"/>
    <property type="project" value="UniProtKB-KW"/>
</dbReference>
<dbReference type="InterPro" id="IPR021217">
    <property type="entry name" value="Phage_1-C74_Orf10"/>
</dbReference>
<dbReference type="Pfam" id="PF10854">
    <property type="entry name" value="DUF2649"/>
    <property type="match status" value="1"/>
</dbReference>
<organismHost>
    <name type="scientific">Spiroplasma melliferum</name>
    <dbReference type="NCBI Taxonomy" id="2134"/>
</organismHost>
<name>ORF10_SPV1C</name>
<evidence type="ECO:0000255" key="1"/>
<evidence type="ECO:0000305" key="2"/>
<organism>
    <name type="scientific">Spiroplasma virus SpV1-C74</name>
    <name type="common">SpV1</name>
    <dbReference type="NCBI Taxonomy" id="185959"/>
    <lineage>
        <taxon>Viruses</taxon>
        <taxon>Monodnaviria</taxon>
        <taxon>Loebvirae</taxon>
        <taxon>Hofneiviricota</taxon>
        <taxon>Faserviricetes</taxon>
        <taxon>Tubulavirales</taxon>
        <taxon>Plectroviridae</taxon>
        <taxon>Vespertiliovirus</taxon>
        <taxon>Vespertiliovirus C74</taxon>
    </lineage>
</organism>
<keyword id="KW-1043">Host membrane</keyword>
<keyword id="KW-0472">Membrane</keyword>
<keyword id="KW-1185">Reference proteome</keyword>
<keyword id="KW-0812">Transmembrane</keyword>
<keyword id="KW-1133">Transmembrane helix</keyword>